<protein>
    <recommendedName>
        <fullName evidence="1">Holliday junction branch migration complex subunit RuvA</fullName>
    </recommendedName>
</protein>
<gene>
    <name evidence="1" type="primary">ruvA</name>
    <name type="ordered locus">SPs1801</name>
</gene>
<sequence length="198" mass="21879">MYDYIKGQLTKITAKYIVVEANGLGYMINVANPYSFTDSVNQLVTIYLHQVIREDAHLLFGFHTEDEKDVFLKLISVSGIGPTTALAIVAVDDNEGLVNAIDNSDIKYLMKFPKIGKKTAQQMVLDLAGKFVEAPQETGHTKARSNKAGNTQLDEAIEALLALGYKAKELKKIRAFFEGTSETAEQYIKSALKLLMKG</sequence>
<proteinExistence type="inferred from homology"/>
<comment type="function">
    <text evidence="1">The RuvA-RuvB-RuvC complex processes Holliday junction (HJ) DNA during genetic recombination and DNA repair, while the RuvA-RuvB complex plays an important role in the rescue of blocked DNA replication forks via replication fork reversal (RFR). RuvA specifically binds to HJ cruciform DNA, conferring on it an open structure. The RuvB hexamer acts as an ATP-dependent pump, pulling dsDNA into and through the RuvAB complex. HJ branch migration allows RuvC to scan DNA until it finds its consensus sequence, where it cleaves and resolves the cruciform DNA.</text>
</comment>
<comment type="subunit">
    <text evidence="1">Homotetramer. Forms an RuvA(8)-RuvB(12)-Holliday junction (HJ) complex. HJ DNA is sandwiched between 2 RuvA tetramers; dsDNA enters through RuvA and exits via RuvB. An RuvB hexamer assembles on each DNA strand where it exits the tetramer. Each RuvB hexamer is contacted by two RuvA subunits (via domain III) on 2 adjacent RuvB subunits; this complex drives branch migration. In the full resolvosome a probable DNA-RuvA(4)-RuvB(12)-RuvC(2) complex forms which resolves the HJ.</text>
</comment>
<comment type="subcellular location">
    <subcellularLocation>
        <location evidence="1">Cytoplasm</location>
    </subcellularLocation>
</comment>
<comment type="domain">
    <text evidence="1">Has three domains with a flexible linker between the domains II and III and assumes an 'L' shape. Domain III is highly mobile and contacts RuvB.</text>
</comment>
<comment type="similarity">
    <text evidence="1">Belongs to the RuvA family.</text>
</comment>
<name>RUVA_STRPQ</name>
<reference key="1">
    <citation type="journal article" date="2003" name="Genome Res.">
        <title>Genome sequence of an M3 strain of Streptococcus pyogenes reveals a large-scale genomic rearrangement in invasive strains and new insights into phage evolution.</title>
        <authorList>
            <person name="Nakagawa I."/>
            <person name="Kurokawa K."/>
            <person name="Yamashita A."/>
            <person name="Nakata M."/>
            <person name="Tomiyasu Y."/>
            <person name="Okahashi N."/>
            <person name="Kawabata S."/>
            <person name="Yamazaki K."/>
            <person name="Shiba T."/>
            <person name="Yasunaga T."/>
            <person name="Hayashi H."/>
            <person name="Hattori M."/>
            <person name="Hamada S."/>
        </authorList>
    </citation>
    <scope>NUCLEOTIDE SEQUENCE [LARGE SCALE GENOMIC DNA]</scope>
    <source>
        <strain>SSI-1</strain>
    </source>
</reference>
<organism>
    <name type="scientific">Streptococcus pyogenes serotype M3 (strain SSI-1)</name>
    <dbReference type="NCBI Taxonomy" id="193567"/>
    <lineage>
        <taxon>Bacteria</taxon>
        <taxon>Bacillati</taxon>
        <taxon>Bacillota</taxon>
        <taxon>Bacilli</taxon>
        <taxon>Lactobacillales</taxon>
        <taxon>Streptococcaceae</taxon>
        <taxon>Streptococcus</taxon>
    </lineage>
</organism>
<evidence type="ECO:0000255" key="1">
    <source>
        <dbReference type="HAMAP-Rule" id="MF_00031"/>
    </source>
</evidence>
<feature type="chain" id="PRO_0000411564" description="Holliday junction branch migration complex subunit RuvA">
    <location>
        <begin position="1"/>
        <end position="198"/>
    </location>
</feature>
<feature type="region of interest" description="Domain I" evidence="1">
    <location>
        <begin position="1"/>
        <end position="63"/>
    </location>
</feature>
<feature type="region of interest" description="Domain II" evidence="1">
    <location>
        <begin position="64"/>
        <end position="142"/>
    </location>
</feature>
<feature type="region of interest" description="Flexible linker" evidence="1">
    <location>
        <begin position="143"/>
        <end position="147"/>
    </location>
</feature>
<feature type="region of interest" description="Domain III" evidence="1">
    <location>
        <begin position="148"/>
        <end position="198"/>
    </location>
</feature>
<accession>P0DF49</accession>
<accession>P66752</accession>
<accession>Q99XN9</accession>
<dbReference type="EMBL" id="BA000034">
    <property type="protein sequence ID" value="BAC64896.1"/>
    <property type="molecule type" value="Genomic_DNA"/>
</dbReference>
<dbReference type="RefSeq" id="WP_002992186.1">
    <property type="nucleotide sequence ID" value="NC_004606.1"/>
</dbReference>
<dbReference type="SMR" id="P0DF49"/>
<dbReference type="GeneID" id="69901573"/>
<dbReference type="KEGG" id="sps:SPs1801"/>
<dbReference type="HOGENOM" id="CLU_087936_1_0_9"/>
<dbReference type="GO" id="GO:0005737">
    <property type="term" value="C:cytoplasm"/>
    <property type="evidence" value="ECO:0007669"/>
    <property type="project" value="UniProtKB-SubCell"/>
</dbReference>
<dbReference type="GO" id="GO:0009379">
    <property type="term" value="C:Holliday junction helicase complex"/>
    <property type="evidence" value="ECO:0007669"/>
    <property type="project" value="InterPro"/>
</dbReference>
<dbReference type="GO" id="GO:0048476">
    <property type="term" value="C:Holliday junction resolvase complex"/>
    <property type="evidence" value="ECO:0007669"/>
    <property type="project" value="UniProtKB-UniRule"/>
</dbReference>
<dbReference type="GO" id="GO:0005524">
    <property type="term" value="F:ATP binding"/>
    <property type="evidence" value="ECO:0007669"/>
    <property type="project" value="InterPro"/>
</dbReference>
<dbReference type="GO" id="GO:0000400">
    <property type="term" value="F:four-way junction DNA binding"/>
    <property type="evidence" value="ECO:0007669"/>
    <property type="project" value="UniProtKB-UniRule"/>
</dbReference>
<dbReference type="GO" id="GO:0009378">
    <property type="term" value="F:four-way junction helicase activity"/>
    <property type="evidence" value="ECO:0007669"/>
    <property type="project" value="InterPro"/>
</dbReference>
<dbReference type="GO" id="GO:0006310">
    <property type="term" value="P:DNA recombination"/>
    <property type="evidence" value="ECO:0007669"/>
    <property type="project" value="UniProtKB-UniRule"/>
</dbReference>
<dbReference type="GO" id="GO:0006281">
    <property type="term" value="P:DNA repair"/>
    <property type="evidence" value="ECO:0007669"/>
    <property type="project" value="UniProtKB-UniRule"/>
</dbReference>
<dbReference type="CDD" id="cd14332">
    <property type="entry name" value="UBA_RuvA_C"/>
    <property type="match status" value="1"/>
</dbReference>
<dbReference type="Gene3D" id="1.10.150.20">
    <property type="entry name" value="5' to 3' exonuclease, C-terminal subdomain"/>
    <property type="match status" value="1"/>
</dbReference>
<dbReference type="Gene3D" id="1.10.8.10">
    <property type="entry name" value="DNA helicase RuvA subunit, C-terminal domain"/>
    <property type="match status" value="1"/>
</dbReference>
<dbReference type="Gene3D" id="2.40.50.140">
    <property type="entry name" value="Nucleic acid-binding proteins"/>
    <property type="match status" value="1"/>
</dbReference>
<dbReference type="HAMAP" id="MF_00031">
    <property type="entry name" value="DNA_HJ_migration_RuvA"/>
    <property type="match status" value="1"/>
</dbReference>
<dbReference type="InterPro" id="IPR013849">
    <property type="entry name" value="DNA_helicase_Holl-junc_RuvA_I"/>
</dbReference>
<dbReference type="InterPro" id="IPR003583">
    <property type="entry name" value="Hlx-hairpin-Hlx_DNA-bd_motif"/>
</dbReference>
<dbReference type="InterPro" id="IPR012340">
    <property type="entry name" value="NA-bd_OB-fold"/>
</dbReference>
<dbReference type="InterPro" id="IPR000085">
    <property type="entry name" value="RuvA"/>
</dbReference>
<dbReference type="InterPro" id="IPR010994">
    <property type="entry name" value="RuvA_2-like"/>
</dbReference>
<dbReference type="InterPro" id="IPR011114">
    <property type="entry name" value="RuvA_C"/>
</dbReference>
<dbReference type="InterPro" id="IPR036267">
    <property type="entry name" value="RuvA_C_sf"/>
</dbReference>
<dbReference type="NCBIfam" id="TIGR00084">
    <property type="entry name" value="ruvA"/>
    <property type="match status" value="1"/>
</dbReference>
<dbReference type="Pfam" id="PF14520">
    <property type="entry name" value="HHH_5"/>
    <property type="match status" value="1"/>
</dbReference>
<dbReference type="Pfam" id="PF07499">
    <property type="entry name" value="RuvA_C"/>
    <property type="match status" value="1"/>
</dbReference>
<dbReference type="Pfam" id="PF01330">
    <property type="entry name" value="RuvA_N"/>
    <property type="match status" value="1"/>
</dbReference>
<dbReference type="SMART" id="SM00278">
    <property type="entry name" value="HhH1"/>
    <property type="match status" value="2"/>
</dbReference>
<dbReference type="SUPFAM" id="SSF46929">
    <property type="entry name" value="DNA helicase RuvA subunit, C-terminal domain"/>
    <property type="match status" value="1"/>
</dbReference>
<dbReference type="SUPFAM" id="SSF50249">
    <property type="entry name" value="Nucleic acid-binding proteins"/>
    <property type="match status" value="1"/>
</dbReference>
<dbReference type="SUPFAM" id="SSF47781">
    <property type="entry name" value="RuvA domain 2-like"/>
    <property type="match status" value="1"/>
</dbReference>
<keyword id="KW-0963">Cytoplasm</keyword>
<keyword id="KW-0227">DNA damage</keyword>
<keyword id="KW-0233">DNA recombination</keyword>
<keyword id="KW-0234">DNA repair</keyword>
<keyword id="KW-0238">DNA-binding</keyword>